<dbReference type="EMBL" id="Y00518">
    <property type="protein sequence ID" value="CAA68572.1"/>
    <property type="molecule type" value="mRNA"/>
</dbReference>
<dbReference type="PIR" id="S00512">
    <property type="entry name" value="S00512"/>
</dbReference>
<dbReference type="RefSeq" id="NP_001183962.1">
    <property type="nucleotide sequence ID" value="NM_001197033.1"/>
</dbReference>
<dbReference type="SMR" id="P18842"/>
<dbReference type="FunCoup" id="P18842">
    <property type="interactions" value="8"/>
</dbReference>
<dbReference type="GlyCosmos" id="P18842">
    <property type="glycosylation" value="1 site, No reported glycans"/>
</dbReference>
<dbReference type="PaxDb" id="9612-ENSCAFP00000005719"/>
<dbReference type="GeneID" id="403959"/>
<dbReference type="CTD" id="3972"/>
<dbReference type="eggNOG" id="ENOG502S49V">
    <property type="taxonomic scope" value="Eukaryota"/>
</dbReference>
<dbReference type="InParanoid" id="P18842"/>
<dbReference type="OrthoDB" id="22315at33554"/>
<dbReference type="Proteomes" id="UP000002254">
    <property type="component" value="Unplaced"/>
</dbReference>
<dbReference type="Proteomes" id="UP000694429">
    <property type="component" value="Unplaced"/>
</dbReference>
<dbReference type="Proteomes" id="UP000694542">
    <property type="component" value="Unplaced"/>
</dbReference>
<dbReference type="Proteomes" id="UP000805418">
    <property type="component" value="Unplaced"/>
</dbReference>
<dbReference type="GO" id="GO:0005737">
    <property type="term" value="C:cytoplasm"/>
    <property type="evidence" value="ECO:0000318"/>
    <property type="project" value="GO_Central"/>
</dbReference>
<dbReference type="GO" id="GO:0005615">
    <property type="term" value="C:extracellular space"/>
    <property type="evidence" value="ECO:0000318"/>
    <property type="project" value="GO_Central"/>
</dbReference>
<dbReference type="GO" id="GO:0005179">
    <property type="term" value="F:hormone activity"/>
    <property type="evidence" value="ECO:0007669"/>
    <property type="project" value="UniProtKB-KW"/>
</dbReference>
<dbReference type="GO" id="GO:0007186">
    <property type="term" value="P:G protein-coupled receptor signaling pathway"/>
    <property type="evidence" value="ECO:0000318"/>
    <property type="project" value="GO_Central"/>
</dbReference>
<dbReference type="CDD" id="cd00069">
    <property type="entry name" value="GHB_like"/>
    <property type="match status" value="1"/>
</dbReference>
<dbReference type="FunFam" id="2.10.90.10:FF:000007">
    <property type="entry name" value="Luteinizing hormone beta subunit"/>
    <property type="match status" value="1"/>
</dbReference>
<dbReference type="Gene3D" id="2.10.90.10">
    <property type="entry name" value="Cystine-knot cytokines"/>
    <property type="match status" value="1"/>
</dbReference>
<dbReference type="InterPro" id="IPR029034">
    <property type="entry name" value="Cystine-knot_cytokine"/>
</dbReference>
<dbReference type="InterPro" id="IPR006208">
    <property type="entry name" value="Glyco_hormone_CN"/>
</dbReference>
<dbReference type="InterPro" id="IPR001545">
    <property type="entry name" value="Gonadotropin_bsu"/>
</dbReference>
<dbReference type="InterPro" id="IPR018245">
    <property type="entry name" value="Gonadotropin_bsu_CS"/>
</dbReference>
<dbReference type="PANTHER" id="PTHR11515">
    <property type="entry name" value="GLYCOPROTEIN HORMONE BETA CHAIN"/>
    <property type="match status" value="1"/>
</dbReference>
<dbReference type="PANTHER" id="PTHR11515:SF11">
    <property type="entry name" value="LUTROPIN SUBUNIT BETA"/>
    <property type="match status" value="1"/>
</dbReference>
<dbReference type="Pfam" id="PF00007">
    <property type="entry name" value="Cys_knot"/>
    <property type="match status" value="1"/>
</dbReference>
<dbReference type="SMART" id="SM00068">
    <property type="entry name" value="GHB"/>
    <property type="match status" value="1"/>
</dbReference>
<dbReference type="SUPFAM" id="SSF57501">
    <property type="entry name" value="Cystine-knot cytokines"/>
    <property type="match status" value="1"/>
</dbReference>
<dbReference type="PROSITE" id="PS00261">
    <property type="entry name" value="GLYCO_HORMONE_BETA_1"/>
    <property type="match status" value="1"/>
</dbReference>
<dbReference type="PROSITE" id="PS00689">
    <property type="entry name" value="GLYCO_HORMONE_BETA_2"/>
    <property type="match status" value="1"/>
</dbReference>
<comment type="function">
    <text>Promotes spermatogenesis and ovulation by stimulating the testes and ovaries to synthesize steroids.</text>
</comment>
<comment type="subunit">
    <text>Heterodimer of a common alpha chain and a unique beta chain which confers biological specificity to thyrotropin, lutropin, follitropin and gonadotropin.</text>
</comment>
<comment type="subcellular location">
    <subcellularLocation>
        <location>Secreted</location>
    </subcellularLocation>
</comment>
<comment type="similarity">
    <text evidence="2">Belongs to the glycoprotein hormones subunit beta family.</text>
</comment>
<keyword id="KW-1015">Disulfide bond</keyword>
<keyword id="KW-0325">Glycoprotein</keyword>
<keyword id="KW-0372">Hormone</keyword>
<keyword id="KW-1185">Reference proteome</keyword>
<keyword id="KW-0964">Secreted</keyword>
<keyword id="KW-0732">Signal</keyword>
<organism>
    <name type="scientific">Canis lupus familiaris</name>
    <name type="common">Dog</name>
    <name type="synonym">Canis familiaris</name>
    <dbReference type="NCBI Taxonomy" id="9615"/>
    <lineage>
        <taxon>Eukaryota</taxon>
        <taxon>Metazoa</taxon>
        <taxon>Chordata</taxon>
        <taxon>Craniata</taxon>
        <taxon>Vertebrata</taxon>
        <taxon>Euteleostomi</taxon>
        <taxon>Mammalia</taxon>
        <taxon>Eutheria</taxon>
        <taxon>Laurasiatheria</taxon>
        <taxon>Carnivora</taxon>
        <taxon>Caniformia</taxon>
        <taxon>Canidae</taxon>
        <taxon>Canis</taxon>
    </lineage>
</organism>
<protein>
    <recommendedName>
        <fullName>Lutropin subunit beta</fullName>
    </recommendedName>
    <alternativeName>
        <fullName>Luteinizing hormone subunit beta</fullName>
        <shortName>LH-B</shortName>
        <shortName>LSH-B</shortName>
        <shortName>LSH-beta</shortName>
    </alternativeName>
    <alternativeName>
        <fullName>Lutropin beta chain</fullName>
    </alternativeName>
</protein>
<sequence length="138" mass="14594">LQGLLLWLLLSVGGVWASRGPLRPLCRPINATLAAENEACPVCITFTTTICAGYCPSMVRVLPAALPPVPQPVCTYHELHFASIRLPGCPPGVDPMVSFPVALSCRCGPCRLSNSDCGGPRAQSLACDRPLLPGLLFL</sequence>
<reference key="1">
    <citation type="journal article" date="1987" name="Nucleic Acids Res.">
        <title>Nucleic acid and amino acid sequences of dog beta LH: comparison to rat, cow and human beta LH.</title>
        <authorList>
            <person name="Wolf D.L."/>
            <person name="Appleby V.L."/>
            <person name="Hjerrild K."/>
            <person name="Baker A.R."/>
            <person name="Talmadge K."/>
        </authorList>
    </citation>
    <scope>NUCLEOTIDE SEQUENCE [MRNA]</scope>
</reference>
<feature type="signal peptide">
    <location>
        <begin position="1" status="less than"/>
        <end position="17"/>
    </location>
</feature>
<feature type="chain" id="PRO_0000011720" description="Lutropin subunit beta">
    <location>
        <begin position="18"/>
        <end position="138"/>
    </location>
</feature>
<feature type="glycosylation site" description="N-linked (GlcNAc...) asparagine" evidence="2">
    <location>
        <position position="30"/>
    </location>
</feature>
<feature type="disulfide bond" evidence="1">
    <location>
        <begin position="26"/>
        <end position="74"/>
    </location>
</feature>
<feature type="disulfide bond" evidence="1">
    <location>
        <begin position="40"/>
        <end position="89"/>
    </location>
</feature>
<feature type="disulfide bond" evidence="1">
    <location>
        <begin position="43"/>
        <end position="127"/>
    </location>
</feature>
<feature type="disulfide bond" evidence="1">
    <location>
        <begin position="51"/>
        <end position="105"/>
    </location>
</feature>
<feature type="disulfide bond" evidence="1">
    <location>
        <begin position="55"/>
        <end position="107"/>
    </location>
</feature>
<feature type="disulfide bond" evidence="1">
    <location>
        <begin position="110"/>
        <end position="117"/>
    </location>
</feature>
<feature type="non-terminal residue">
    <location>
        <position position="1"/>
    </location>
</feature>
<gene>
    <name type="primary">LHB</name>
</gene>
<accession>P18842</accession>
<name>LSHB_CANLF</name>
<evidence type="ECO:0000250" key="1"/>
<evidence type="ECO:0000305" key="2"/>
<proteinExistence type="evidence at transcript level"/>